<protein>
    <recommendedName>
        <fullName evidence="1">Regulatory protein RecX</fullName>
    </recommendedName>
</protein>
<reference key="1">
    <citation type="journal article" date="2011" name="J. Bacteriol.">
        <title>Comparative genomics of 28 Salmonella enterica isolates: evidence for CRISPR-mediated adaptive sublineage evolution.</title>
        <authorList>
            <person name="Fricke W.F."/>
            <person name="Mammel M.K."/>
            <person name="McDermott P.F."/>
            <person name="Tartera C."/>
            <person name="White D.G."/>
            <person name="Leclerc J.E."/>
            <person name="Ravel J."/>
            <person name="Cebula T.A."/>
        </authorList>
    </citation>
    <scope>NUCLEOTIDE SEQUENCE [LARGE SCALE GENOMIC DNA]</scope>
    <source>
        <strain>SL483</strain>
    </source>
</reference>
<evidence type="ECO:0000255" key="1">
    <source>
        <dbReference type="HAMAP-Rule" id="MF_01114"/>
    </source>
</evidence>
<name>RECX_SALA4</name>
<gene>
    <name evidence="1" type="primary">recX</name>
    <name type="ordered locus">SeAg_B2947</name>
</gene>
<accession>B5F351</accession>
<keyword id="KW-0963">Cytoplasm</keyword>
<organism>
    <name type="scientific">Salmonella agona (strain SL483)</name>
    <dbReference type="NCBI Taxonomy" id="454166"/>
    <lineage>
        <taxon>Bacteria</taxon>
        <taxon>Pseudomonadati</taxon>
        <taxon>Pseudomonadota</taxon>
        <taxon>Gammaproteobacteria</taxon>
        <taxon>Enterobacterales</taxon>
        <taxon>Enterobacteriaceae</taxon>
        <taxon>Salmonella</taxon>
    </lineage>
</organism>
<sequence length="166" mass="19664">MSEPTSRRPAYARLLDRAVRILAVRDHSEQELRRKLSAPVMGKNGPEEIDATADDYERVIAWCHEHHYLDDERFVMRFIASRSRKGYGPARIRQELNQKGISRESTEKAMRECEIDWSEMAREQAVRKYGEPLPSNFSEKVKVQRFLLYRGYLMDDIQQIWRNFAD</sequence>
<proteinExistence type="inferred from homology"/>
<feature type="chain" id="PRO_1000137186" description="Regulatory protein RecX">
    <location>
        <begin position="1"/>
        <end position="166"/>
    </location>
</feature>
<comment type="function">
    <text evidence="1">Modulates RecA activity.</text>
</comment>
<comment type="subcellular location">
    <subcellularLocation>
        <location evidence="1">Cytoplasm</location>
    </subcellularLocation>
</comment>
<comment type="similarity">
    <text evidence="1">Belongs to the RecX family.</text>
</comment>
<dbReference type="EMBL" id="CP001138">
    <property type="protein sequence ID" value="ACH49978.1"/>
    <property type="molecule type" value="Genomic_DNA"/>
</dbReference>
<dbReference type="RefSeq" id="WP_001294863.1">
    <property type="nucleotide sequence ID" value="NC_011149.1"/>
</dbReference>
<dbReference type="SMR" id="B5F351"/>
<dbReference type="KEGG" id="sea:SeAg_B2947"/>
<dbReference type="HOGENOM" id="CLU_066607_3_2_6"/>
<dbReference type="Proteomes" id="UP000008819">
    <property type="component" value="Chromosome"/>
</dbReference>
<dbReference type="GO" id="GO:0005737">
    <property type="term" value="C:cytoplasm"/>
    <property type="evidence" value="ECO:0007669"/>
    <property type="project" value="UniProtKB-SubCell"/>
</dbReference>
<dbReference type="GO" id="GO:0006282">
    <property type="term" value="P:regulation of DNA repair"/>
    <property type="evidence" value="ECO:0007669"/>
    <property type="project" value="UniProtKB-UniRule"/>
</dbReference>
<dbReference type="FunFam" id="1.10.10.10:FF:000133">
    <property type="entry name" value="Regulatory protein RecX"/>
    <property type="match status" value="1"/>
</dbReference>
<dbReference type="FunFam" id="1.10.10.10:FF:000134">
    <property type="entry name" value="Regulatory protein RecX"/>
    <property type="match status" value="1"/>
</dbReference>
<dbReference type="Gene3D" id="1.10.10.10">
    <property type="entry name" value="Winged helix-like DNA-binding domain superfamily/Winged helix DNA-binding domain"/>
    <property type="match status" value="3"/>
</dbReference>
<dbReference type="HAMAP" id="MF_01114">
    <property type="entry name" value="RecX"/>
    <property type="match status" value="1"/>
</dbReference>
<dbReference type="InterPro" id="IPR053926">
    <property type="entry name" value="RecX_HTH_1st"/>
</dbReference>
<dbReference type="InterPro" id="IPR053924">
    <property type="entry name" value="RecX_HTH_2nd"/>
</dbReference>
<dbReference type="InterPro" id="IPR053925">
    <property type="entry name" value="RecX_HTH_3rd"/>
</dbReference>
<dbReference type="InterPro" id="IPR003783">
    <property type="entry name" value="Regulatory_RecX"/>
</dbReference>
<dbReference type="InterPro" id="IPR036388">
    <property type="entry name" value="WH-like_DNA-bd_sf"/>
</dbReference>
<dbReference type="NCBIfam" id="NF001052">
    <property type="entry name" value="PRK00117.1-1"/>
    <property type="match status" value="1"/>
</dbReference>
<dbReference type="PANTHER" id="PTHR33602">
    <property type="entry name" value="REGULATORY PROTEIN RECX FAMILY PROTEIN"/>
    <property type="match status" value="1"/>
</dbReference>
<dbReference type="PANTHER" id="PTHR33602:SF1">
    <property type="entry name" value="REGULATORY PROTEIN RECX FAMILY PROTEIN"/>
    <property type="match status" value="1"/>
</dbReference>
<dbReference type="Pfam" id="PF21982">
    <property type="entry name" value="RecX_HTH1"/>
    <property type="match status" value="1"/>
</dbReference>
<dbReference type="Pfam" id="PF02631">
    <property type="entry name" value="RecX_HTH2"/>
    <property type="match status" value="1"/>
</dbReference>
<dbReference type="Pfam" id="PF21981">
    <property type="entry name" value="RecX_HTH3"/>
    <property type="match status" value="1"/>
</dbReference>